<sequence>MPFLHGFRRIIFEYQPLVDAILGSLGIQDPERQESLDRPSYVASEESRILVLTELLERKAHSPFYQEGVSNALLKMAELGLTRAADVLLRHGANLNFEDPVTYYTALHIAVLRNQPDMVELLVHHGADINRRDRIHESSPLDLASEEPERLPCLQRLLDLGADVNAADKHGKTALLHALASSDGVQIHNTENIRLLLEGGADVKATTKDGDTVFTCIIFLLGETVGGDKEEAQMINRFCFQVTRLLLAHGADPSECPAHESLTHICLKSFKLHFPLLRFLLESGAAYNCSLHGASCWSGFHIIFERLCSHPGCTEDESHTDLLRKAETVLDLMVTNSQKLQLPENFDIHPVGSLAEKIQALHFSLRQLESYPPPLKHLCRVAIRLYLQPWPVDVKVKALPLPDRLKWYLLSEHSGSMEDDI</sequence>
<comment type="function">
    <text evidence="2">Probable substrate-recognition component of a SCF-like ECS (Elongin-Cullin-SOCS-box protein) E3 ubiquitin-protein ligase complex which mediates the ubiquitination and subsequent proteasomal degradation of target proteins. May play a role in the regulation of cell proliferation and autophagy by promoting the ubiquitination and degradation of SQSTM1.</text>
</comment>
<comment type="pathway">
    <text>Protein modification; protein ubiquitination.</text>
</comment>
<comment type="subunit">
    <text evidence="1 2">Binds APS. Identified in a complex with ELOB and ELOC (By similarity). Interacts with CUL5 and RNF7. Interacts with SQSTM1 (By similarity).</text>
</comment>
<comment type="subcellular location">
    <subcellularLocation>
        <location evidence="1">Cytoplasm</location>
    </subcellularLocation>
</comment>
<comment type="domain">
    <text evidence="1">The SOCS box domain mediates the interaction with the Elongin BC complex, an adapter module in different E3 ubiquitin-protein ligase complexes.</text>
</comment>
<comment type="similarity">
    <text evidence="4">Belongs to the ankyrin SOCS box (ASB) family.</text>
</comment>
<name>ASB6_PONAB</name>
<organism>
    <name type="scientific">Pongo abelii</name>
    <name type="common">Sumatran orangutan</name>
    <name type="synonym">Pongo pygmaeus abelii</name>
    <dbReference type="NCBI Taxonomy" id="9601"/>
    <lineage>
        <taxon>Eukaryota</taxon>
        <taxon>Metazoa</taxon>
        <taxon>Chordata</taxon>
        <taxon>Craniata</taxon>
        <taxon>Vertebrata</taxon>
        <taxon>Euteleostomi</taxon>
        <taxon>Mammalia</taxon>
        <taxon>Eutheria</taxon>
        <taxon>Euarchontoglires</taxon>
        <taxon>Primates</taxon>
        <taxon>Haplorrhini</taxon>
        <taxon>Catarrhini</taxon>
        <taxon>Hominidae</taxon>
        <taxon>Pongo</taxon>
    </lineage>
</organism>
<accession>Q5R4M7</accession>
<proteinExistence type="evidence at transcript level"/>
<evidence type="ECO:0000250" key="1"/>
<evidence type="ECO:0000250" key="2">
    <source>
        <dbReference type="UniProtKB" id="Q9NWX5"/>
    </source>
</evidence>
<evidence type="ECO:0000255" key="3">
    <source>
        <dbReference type="PROSITE-ProRule" id="PRU00194"/>
    </source>
</evidence>
<evidence type="ECO:0000305" key="4"/>
<dbReference type="EMBL" id="CR861219">
    <property type="protein sequence ID" value="CAH93289.1"/>
    <property type="molecule type" value="mRNA"/>
</dbReference>
<dbReference type="RefSeq" id="NP_001126935.1">
    <property type="nucleotide sequence ID" value="NM_001133463.1"/>
</dbReference>
<dbReference type="SMR" id="Q5R4M7"/>
<dbReference type="FunCoup" id="Q5R4M7">
    <property type="interactions" value="1664"/>
</dbReference>
<dbReference type="STRING" id="9601.ENSPPYP00000022058"/>
<dbReference type="GeneID" id="100173953"/>
<dbReference type="KEGG" id="pon:100173953"/>
<dbReference type="CTD" id="140459"/>
<dbReference type="eggNOG" id="KOG0504">
    <property type="taxonomic scope" value="Eukaryota"/>
</dbReference>
<dbReference type="InParanoid" id="Q5R4M7"/>
<dbReference type="OrthoDB" id="194358at2759"/>
<dbReference type="UniPathway" id="UPA00143"/>
<dbReference type="Proteomes" id="UP000001595">
    <property type="component" value="Unplaced"/>
</dbReference>
<dbReference type="GO" id="GO:0005737">
    <property type="term" value="C:cytoplasm"/>
    <property type="evidence" value="ECO:0007669"/>
    <property type="project" value="UniProtKB-SubCell"/>
</dbReference>
<dbReference type="GO" id="GO:0035556">
    <property type="term" value="P:intracellular signal transduction"/>
    <property type="evidence" value="ECO:0007669"/>
    <property type="project" value="InterPro"/>
</dbReference>
<dbReference type="GO" id="GO:0016567">
    <property type="term" value="P:protein ubiquitination"/>
    <property type="evidence" value="ECO:0007669"/>
    <property type="project" value="UniProtKB-UniPathway"/>
</dbReference>
<dbReference type="CDD" id="cd03725">
    <property type="entry name" value="SOCS_ASB6"/>
    <property type="match status" value="1"/>
</dbReference>
<dbReference type="FunFam" id="1.10.750.20:FF:000001">
    <property type="entry name" value="Ankyrin repeat and SOCS box containing 1"/>
    <property type="match status" value="1"/>
</dbReference>
<dbReference type="FunFam" id="1.25.40.20:FF:000362">
    <property type="entry name" value="Ankyrin repeat and SOCS box containing 6"/>
    <property type="match status" value="1"/>
</dbReference>
<dbReference type="Gene3D" id="1.25.40.20">
    <property type="entry name" value="Ankyrin repeat-containing domain"/>
    <property type="match status" value="1"/>
</dbReference>
<dbReference type="Gene3D" id="1.10.750.20">
    <property type="entry name" value="SOCS box"/>
    <property type="match status" value="1"/>
</dbReference>
<dbReference type="InterPro" id="IPR002110">
    <property type="entry name" value="Ankyrin_rpt"/>
</dbReference>
<dbReference type="InterPro" id="IPR036770">
    <property type="entry name" value="Ankyrin_rpt-contain_sf"/>
</dbReference>
<dbReference type="InterPro" id="IPR037327">
    <property type="entry name" value="ASB6_SOCS"/>
</dbReference>
<dbReference type="InterPro" id="IPR001496">
    <property type="entry name" value="SOCS_box"/>
</dbReference>
<dbReference type="InterPro" id="IPR036036">
    <property type="entry name" value="SOCS_box-like_dom_sf"/>
</dbReference>
<dbReference type="PANTHER" id="PTHR24132">
    <property type="entry name" value="ANKYRIN REPEAT AND SOCS BOX PROTEIN 6"/>
    <property type="match status" value="1"/>
</dbReference>
<dbReference type="PANTHER" id="PTHR24132:SF24">
    <property type="entry name" value="ANKYRIN REPEAT AND SOCS BOX PROTEIN 6"/>
    <property type="match status" value="1"/>
</dbReference>
<dbReference type="Pfam" id="PF12796">
    <property type="entry name" value="Ank_2"/>
    <property type="match status" value="1"/>
</dbReference>
<dbReference type="Pfam" id="PF13637">
    <property type="entry name" value="Ank_4"/>
    <property type="match status" value="1"/>
</dbReference>
<dbReference type="Pfam" id="PF07525">
    <property type="entry name" value="SOCS_box"/>
    <property type="match status" value="1"/>
</dbReference>
<dbReference type="SMART" id="SM00248">
    <property type="entry name" value="ANK"/>
    <property type="match status" value="5"/>
</dbReference>
<dbReference type="SMART" id="SM00253">
    <property type="entry name" value="SOCS"/>
    <property type="match status" value="1"/>
</dbReference>
<dbReference type="SMART" id="SM00969">
    <property type="entry name" value="SOCS_box"/>
    <property type="match status" value="1"/>
</dbReference>
<dbReference type="SUPFAM" id="SSF48403">
    <property type="entry name" value="Ankyrin repeat"/>
    <property type="match status" value="1"/>
</dbReference>
<dbReference type="SUPFAM" id="SSF158235">
    <property type="entry name" value="SOCS box-like"/>
    <property type="match status" value="1"/>
</dbReference>
<dbReference type="PROSITE" id="PS50297">
    <property type="entry name" value="ANK_REP_REGION"/>
    <property type="match status" value="1"/>
</dbReference>
<dbReference type="PROSITE" id="PS50088">
    <property type="entry name" value="ANK_REPEAT"/>
    <property type="match status" value="2"/>
</dbReference>
<dbReference type="PROSITE" id="PS50225">
    <property type="entry name" value="SOCS"/>
    <property type="match status" value="1"/>
</dbReference>
<gene>
    <name type="primary">ASB6</name>
</gene>
<feature type="chain" id="PRO_0000285850" description="Ankyrin repeat and SOCS box protein 6">
    <location>
        <begin position="1"/>
        <end position="421"/>
    </location>
</feature>
<feature type="repeat" description="ANK 1">
    <location>
        <begin position="67"/>
        <end position="97"/>
    </location>
</feature>
<feature type="repeat" description="ANK 2">
    <location>
        <begin position="102"/>
        <end position="131"/>
    </location>
</feature>
<feature type="repeat" description="ANK 3">
    <location>
        <begin position="136"/>
        <end position="166"/>
    </location>
</feature>
<feature type="repeat" description="ANK 4">
    <location>
        <begin position="170"/>
        <end position="205"/>
    </location>
</feature>
<feature type="repeat" description="ANK 5">
    <location>
        <begin position="226"/>
        <end position="255"/>
    </location>
</feature>
<feature type="repeat" description="ANK 6">
    <location>
        <begin position="260"/>
        <end position="289"/>
    </location>
</feature>
<feature type="domain" description="SOCS box" evidence="3">
    <location>
        <begin position="360"/>
        <end position="415"/>
    </location>
</feature>
<protein>
    <recommendedName>
        <fullName>Ankyrin repeat and SOCS box protein 6</fullName>
        <shortName>ASB-6</shortName>
    </recommendedName>
</protein>
<keyword id="KW-0040">ANK repeat</keyword>
<keyword id="KW-0963">Cytoplasm</keyword>
<keyword id="KW-1185">Reference proteome</keyword>
<keyword id="KW-0677">Repeat</keyword>
<keyword id="KW-0833">Ubl conjugation pathway</keyword>
<reference key="1">
    <citation type="submission" date="2004-11" db="EMBL/GenBank/DDBJ databases">
        <authorList>
            <consortium name="The German cDNA consortium"/>
        </authorList>
    </citation>
    <scope>NUCLEOTIDE SEQUENCE [LARGE SCALE MRNA]</scope>
    <source>
        <tissue>Brain cortex</tissue>
    </source>
</reference>